<feature type="chain" id="PRO_1000099201" description="Mannitol-1-phosphate 5-dehydrogenase">
    <location>
        <begin position="1"/>
        <end position="382"/>
    </location>
</feature>
<feature type="binding site" evidence="1">
    <location>
        <begin position="3"/>
        <end position="14"/>
    </location>
    <ligand>
        <name>NAD(+)</name>
        <dbReference type="ChEBI" id="CHEBI:57540"/>
    </ligand>
</feature>
<reference key="1">
    <citation type="journal article" date="2009" name="BMC Genomics">
        <title>Pseudogene accumulation in the evolutionary histories of Salmonella enterica serovars Paratyphi A and Typhi.</title>
        <authorList>
            <person name="Holt K.E."/>
            <person name="Thomson N.R."/>
            <person name="Wain J."/>
            <person name="Langridge G.C."/>
            <person name="Hasan R."/>
            <person name="Bhutta Z.A."/>
            <person name="Quail M.A."/>
            <person name="Norbertczak H."/>
            <person name="Walker D."/>
            <person name="Simmonds M."/>
            <person name="White B."/>
            <person name="Bason N."/>
            <person name="Mungall K."/>
            <person name="Dougan G."/>
            <person name="Parkhill J."/>
        </authorList>
    </citation>
    <scope>NUCLEOTIDE SEQUENCE [LARGE SCALE GENOMIC DNA]</scope>
    <source>
        <strain>AKU_12601</strain>
    </source>
</reference>
<gene>
    <name evidence="1" type="primary">mtlD</name>
    <name type="ordered locus">SSPA3303</name>
</gene>
<proteinExistence type="inferred from homology"/>
<evidence type="ECO:0000255" key="1">
    <source>
        <dbReference type="HAMAP-Rule" id="MF_00196"/>
    </source>
</evidence>
<sequence length="382" mass="40955">MKALHFGAGNIGRGFIGKLLADAGIQLTFADVNQVVLDALNARHSYQVHVVGENEQVDTVSGVNAVSSIGDDVVDLIAHVDLITTAVGPVVLERIAPAIAKGLVKRKAQGVDAPLNIIACENMVRGTTQLKGHVMNALPEDAKAWVEEHVGFVDSAVDRIVPPSASATNDPLEVTVETFSEWIVDKTQFKGALPNIPGMELTDNLMAFVERKLFTLNTGHAITAYLGKLAGHQTIRDAILDESIRAVVKGAMEESGAVLIKRYGFDADKHAAYIQKILGRFENPYLKDDVERVGRQPLRKLSAGDRLIKPLLGTLEYGLPHVNLVKGIAAAMHFRSDEDPQAQELAALITEKGPQAALAQISGLDANSDVVAEAVNAYNATK</sequence>
<organism>
    <name type="scientific">Salmonella paratyphi A (strain AKU_12601)</name>
    <dbReference type="NCBI Taxonomy" id="554290"/>
    <lineage>
        <taxon>Bacteria</taxon>
        <taxon>Pseudomonadati</taxon>
        <taxon>Pseudomonadota</taxon>
        <taxon>Gammaproteobacteria</taxon>
        <taxon>Enterobacterales</taxon>
        <taxon>Enterobacteriaceae</taxon>
        <taxon>Salmonella</taxon>
    </lineage>
</organism>
<comment type="catalytic activity">
    <reaction evidence="1">
        <text>D-mannitol 1-phosphate + NAD(+) = beta-D-fructose 6-phosphate + NADH + H(+)</text>
        <dbReference type="Rhea" id="RHEA:19661"/>
        <dbReference type="ChEBI" id="CHEBI:15378"/>
        <dbReference type="ChEBI" id="CHEBI:57540"/>
        <dbReference type="ChEBI" id="CHEBI:57634"/>
        <dbReference type="ChEBI" id="CHEBI:57945"/>
        <dbReference type="ChEBI" id="CHEBI:61381"/>
        <dbReference type="EC" id="1.1.1.17"/>
    </reaction>
</comment>
<comment type="similarity">
    <text evidence="1">Belongs to the mannitol dehydrogenase family.</text>
</comment>
<dbReference type="EC" id="1.1.1.17" evidence="1"/>
<dbReference type="EMBL" id="FM200053">
    <property type="protein sequence ID" value="CAR61567.1"/>
    <property type="molecule type" value="Genomic_DNA"/>
</dbReference>
<dbReference type="RefSeq" id="WP_000645397.1">
    <property type="nucleotide sequence ID" value="NC_011147.1"/>
</dbReference>
<dbReference type="SMR" id="B5BHX1"/>
<dbReference type="KEGG" id="sek:SSPA3303"/>
<dbReference type="HOGENOM" id="CLU_036089_2_0_6"/>
<dbReference type="Proteomes" id="UP000001869">
    <property type="component" value="Chromosome"/>
</dbReference>
<dbReference type="GO" id="GO:0005829">
    <property type="term" value="C:cytosol"/>
    <property type="evidence" value="ECO:0007669"/>
    <property type="project" value="TreeGrafter"/>
</dbReference>
<dbReference type="GO" id="GO:0008926">
    <property type="term" value="F:mannitol-1-phosphate 5-dehydrogenase activity"/>
    <property type="evidence" value="ECO:0007669"/>
    <property type="project" value="UniProtKB-UniRule"/>
</dbReference>
<dbReference type="GO" id="GO:0019592">
    <property type="term" value="P:mannitol catabolic process"/>
    <property type="evidence" value="ECO:0007669"/>
    <property type="project" value="TreeGrafter"/>
</dbReference>
<dbReference type="FunFam" id="1.10.1040.10:FF:000009">
    <property type="entry name" value="Mannitol-1-phosphate 5-dehydrogenase"/>
    <property type="match status" value="1"/>
</dbReference>
<dbReference type="FunFam" id="3.40.50.720:FF:000075">
    <property type="entry name" value="Mannitol-1-phosphate 5-dehydrogenase"/>
    <property type="match status" value="1"/>
</dbReference>
<dbReference type="Gene3D" id="1.10.1040.10">
    <property type="entry name" value="N-(1-d-carboxylethyl)-l-norvaline Dehydrogenase, domain 2"/>
    <property type="match status" value="1"/>
</dbReference>
<dbReference type="Gene3D" id="3.40.50.720">
    <property type="entry name" value="NAD(P)-binding Rossmann-like Domain"/>
    <property type="match status" value="1"/>
</dbReference>
<dbReference type="HAMAP" id="MF_00196">
    <property type="entry name" value="Mannitol_dehydrog"/>
    <property type="match status" value="1"/>
</dbReference>
<dbReference type="InterPro" id="IPR008927">
    <property type="entry name" value="6-PGluconate_DH-like_C_sf"/>
</dbReference>
<dbReference type="InterPro" id="IPR013328">
    <property type="entry name" value="6PGD_dom2"/>
</dbReference>
<dbReference type="InterPro" id="IPR023028">
    <property type="entry name" value="Mannitol_1_phos_5_DH"/>
</dbReference>
<dbReference type="InterPro" id="IPR000669">
    <property type="entry name" value="Mannitol_DH"/>
</dbReference>
<dbReference type="InterPro" id="IPR013118">
    <property type="entry name" value="Mannitol_DH_C"/>
</dbReference>
<dbReference type="InterPro" id="IPR023027">
    <property type="entry name" value="Mannitol_DH_CS"/>
</dbReference>
<dbReference type="InterPro" id="IPR013131">
    <property type="entry name" value="Mannitol_DH_N"/>
</dbReference>
<dbReference type="InterPro" id="IPR036291">
    <property type="entry name" value="NAD(P)-bd_dom_sf"/>
</dbReference>
<dbReference type="NCBIfam" id="NF002646">
    <property type="entry name" value="PRK02318.1-2"/>
    <property type="match status" value="1"/>
</dbReference>
<dbReference type="NCBIfam" id="NF002647">
    <property type="entry name" value="PRK02318.1-3"/>
    <property type="match status" value="1"/>
</dbReference>
<dbReference type="NCBIfam" id="NF002648">
    <property type="entry name" value="PRK02318.1-4"/>
    <property type="match status" value="1"/>
</dbReference>
<dbReference type="NCBIfam" id="NF002650">
    <property type="entry name" value="PRK02318.2-2"/>
    <property type="match status" value="1"/>
</dbReference>
<dbReference type="NCBIfam" id="NF002652">
    <property type="entry name" value="PRK02318.2-5"/>
    <property type="match status" value="1"/>
</dbReference>
<dbReference type="PANTHER" id="PTHR30524:SF0">
    <property type="entry name" value="ALTRONATE OXIDOREDUCTASE-RELATED"/>
    <property type="match status" value="1"/>
</dbReference>
<dbReference type="PANTHER" id="PTHR30524">
    <property type="entry name" value="MANNITOL-1-PHOSPHATE 5-DEHYDROGENASE"/>
    <property type="match status" value="1"/>
</dbReference>
<dbReference type="Pfam" id="PF01232">
    <property type="entry name" value="Mannitol_dh"/>
    <property type="match status" value="1"/>
</dbReference>
<dbReference type="Pfam" id="PF08125">
    <property type="entry name" value="Mannitol_dh_C"/>
    <property type="match status" value="1"/>
</dbReference>
<dbReference type="PRINTS" id="PR00084">
    <property type="entry name" value="MTLDHDRGNASE"/>
</dbReference>
<dbReference type="SUPFAM" id="SSF48179">
    <property type="entry name" value="6-phosphogluconate dehydrogenase C-terminal domain-like"/>
    <property type="match status" value="1"/>
</dbReference>
<dbReference type="SUPFAM" id="SSF51735">
    <property type="entry name" value="NAD(P)-binding Rossmann-fold domains"/>
    <property type="match status" value="1"/>
</dbReference>
<dbReference type="PROSITE" id="PS00974">
    <property type="entry name" value="MANNITOL_DHGENASE"/>
    <property type="match status" value="1"/>
</dbReference>
<keyword id="KW-0520">NAD</keyword>
<keyword id="KW-0560">Oxidoreductase</keyword>
<name>MTLD_SALPK</name>
<protein>
    <recommendedName>
        <fullName evidence="1">Mannitol-1-phosphate 5-dehydrogenase</fullName>
        <ecNumber evidence="1">1.1.1.17</ecNumber>
    </recommendedName>
</protein>
<accession>B5BHX1</accession>